<comment type="function">
    <text evidence="2">Transcription repression factor which plays an important role in the establishment of the regional subdivision of the developing brain and in the development of the telencephalon.</text>
</comment>
<comment type="subunit">
    <text evidence="2 3">Interacts with KDM5B (By similarity). Interacts with GRG6/TLE6 (By similarity). Interacts with TLE1; the interaction is inhibited by interaction with TLE6/GRG6 (By similarity).</text>
</comment>
<comment type="subcellular location">
    <subcellularLocation>
        <location evidence="4">Nucleus</location>
    </subcellularLocation>
</comment>
<feature type="chain" id="PRO_0000254888" description="Forkhead box protein G1">
    <location>
        <begin position="1"/>
        <end position="484"/>
    </location>
</feature>
<feature type="DNA-binding region" description="Fork-head" evidence="4">
    <location>
        <begin position="176"/>
        <end position="270"/>
    </location>
</feature>
<feature type="region of interest" description="Disordered" evidence="5">
    <location>
        <begin position="31"/>
        <end position="176"/>
    </location>
</feature>
<feature type="region of interest" description="Required for interaction with TLE6" evidence="3">
    <location>
        <begin position="244"/>
        <end position="339"/>
    </location>
</feature>
<feature type="region of interest" description="Interaction with KDM5B" evidence="1">
    <location>
        <begin position="378"/>
        <end position="401"/>
    </location>
</feature>
<feature type="region of interest" description="Disordered" evidence="5">
    <location>
        <begin position="422"/>
        <end position="450"/>
    </location>
</feature>
<feature type="compositionally biased region" description="Basic residues" evidence="5">
    <location>
        <begin position="35"/>
        <end position="57"/>
    </location>
</feature>
<feature type="compositionally biased region" description="Pro residues" evidence="5">
    <location>
        <begin position="58"/>
        <end position="81"/>
    </location>
</feature>
<feature type="compositionally biased region" description="Gly residues" evidence="5">
    <location>
        <begin position="117"/>
        <end position="130"/>
    </location>
</feature>
<feature type="compositionally biased region" description="Basic and acidic residues" evidence="5">
    <location>
        <begin position="137"/>
        <end position="176"/>
    </location>
</feature>
<feature type="compositionally biased region" description="Low complexity" evidence="5">
    <location>
        <begin position="422"/>
        <end position="445"/>
    </location>
</feature>
<organism>
    <name type="scientific">Pipistrellus rusticus</name>
    <name type="common">Rusty pipistrelle</name>
    <dbReference type="NCBI Taxonomy" id="372076"/>
    <lineage>
        <taxon>Eukaryota</taxon>
        <taxon>Metazoa</taxon>
        <taxon>Chordata</taxon>
        <taxon>Craniata</taxon>
        <taxon>Vertebrata</taxon>
        <taxon>Euteleostomi</taxon>
        <taxon>Mammalia</taxon>
        <taxon>Eutheria</taxon>
        <taxon>Laurasiatheria</taxon>
        <taxon>Chiroptera</taxon>
        <taxon>Yangochiroptera</taxon>
        <taxon>Vespertilionidae</taxon>
        <taxon>Pipistrellus</taxon>
    </lineage>
</organism>
<reference key="1">
    <citation type="submission" date="2006-02" db="EMBL/GenBank/DDBJ databases">
        <title>Evolutionary evolution of forkhead box G1.</title>
        <authorList>
            <person name="Bredenkamp N."/>
            <person name="Illing N."/>
        </authorList>
    </citation>
    <scope>NUCLEOTIDE SEQUENCE [GENOMIC DNA]</scope>
</reference>
<keyword id="KW-0217">Developmental protein</keyword>
<keyword id="KW-0238">DNA-binding</keyword>
<keyword id="KW-0539">Nucleus</keyword>
<keyword id="KW-0656">Proto-oncogene</keyword>
<keyword id="KW-0804">Transcription</keyword>
<keyword id="KW-0805">Transcription regulation</keyword>
<evidence type="ECO:0000250" key="1"/>
<evidence type="ECO:0000250" key="2">
    <source>
        <dbReference type="UniProtKB" id="P55316"/>
    </source>
</evidence>
<evidence type="ECO:0000250" key="3">
    <source>
        <dbReference type="UniProtKB" id="Q60987"/>
    </source>
</evidence>
<evidence type="ECO:0000255" key="4">
    <source>
        <dbReference type="PROSITE-ProRule" id="PRU00089"/>
    </source>
</evidence>
<evidence type="ECO:0000256" key="5">
    <source>
        <dbReference type="SAM" id="MobiDB-lite"/>
    </source>
</evidence>
<gene>
    <name type="primary">FOXG1</name>
</gene>
<name>FOXG1_PIPRU</name>
<accession>Q1A1A4</accession>
<protein>
    <recommendedName>
        <fullName>Forkhead box protein G1</fullName>
        <shortName>FoxG1</shortName>
    </recommendedName>
</protein>
<proteinExistence type="inferred from homology"/>
<dbReference type="EMBL" id="DQ387963">
    <property type="protein sequence ID" value="ABD38846.1"/>
    <property type="molecule type" value="Genomic_DNA"/>
</dbReference>
<dbReference type="SMR" id="Q1A1A4"/>
<dbReference type="GO" id="GO:0005634">
    <property type="term" value="C:nucleus"/>
    <property type="evidence" value="ECO:0007669"/>
    <property type="project" value="UniProtKB-SubCell"/>
</dbReference>
<dbReference type="GO" id="GO:0003700">
    <property type="term" value="F:DNA-binding transcription factor activity"/>
    <property type="evidence" value="ECO:0007669"/>
    <property type="project" value="InterPro"/>
</dbReference>
<dbReference type="GO" id="GO:1990837">
    <property type="term" value="F:sequence-specific double-stranded DNA binding"/>
    <property type="evidence" value="ECO:0007669"/>
    <property type="project" value="TreeGrafter"/>
</dbReference>
<dbReference type="GO" id="GO:0006357">
    <property type="term" value="P:regulation of transcription by RNA polymerase II"/>
    <property type="evidence" value="ECO:0007669"/>
    <property type="project" value="TreeGrafter"/>
</dbReference>
<dbReference type="CDD" id="cd20021">
    <property type="entry name" value="FH_FOXG"/>
    <property type="match status" value="1"/>
</dbReference>
<dbReference type="FunFam" id="1.10.10.10:FF:000135">
    <property type="entry name" value="forkhead box protein G1"/>
    <property type="match status" value="1"/>
</dbReference>
<dbReference type="Gene3D" id="1.10.10.10">
    <property type="entry name" value="Winged helix-like DNA-binding domain superfamily/Winged helix DNA-binding domain"/>
    <property type="match status" value="1"/>
</dbReference>
<dbReference type="InterPro" id="IPR001766">
    <property type="entry name" value="Fork_head_dom"/>
</dbReference>
<dbReference type="InterPro" id="IPR047208">
    <property type="entry name" value="FOXG1"/>
</dbReference>
<dbReference type="InterPro" id="IPR018122">
    <property type="entry name" value="TF_fork_head_CS_1"/>
</dbReference>
<dbReference type="InterPro" id="IPR030456">
    <property type="entry name" value="TF_fork_head_CS_2"/>
</dbReference>
<dbReference type="InterPro" id="IPR036388">
    <property type="entry name" value="WH-like_DNA-bd_sf"/>
</dbReference>
<dbReference type="InterPro" id="IPR036390">
    <property type="entry name" value="WH_DNA-bd_sf"/>
</dbReference>
<dbReference type="PANTHER" id="PTHR46617">
    <property type="entry name" value="FORKHEAD BOX PROTEIN G1"/>
    <property type="match status" value="1"/>
</dbReference>
<dbReference type="PANTHER" id="PTHR46617:SF3">
    <property type="entry name" value="FORKHEAD BOX PROTEIN G1"/>
    <property type="match status" value="1"/>
</dbReference>
<dbReference type="Pfam" id="PF00250">
    <property type="entry name" value="Forkhead"/>
    <property type="match status" value="1"/>
</dbReference>
<dbReference type="PRINTS" id="PR00053">
    <property type="entry name" value="FORKHEAD"/>
</dbReference>
<dbReference type="SMART" id="SM00339">
    <property type="entry name" value="FH"/>
    <property type="match status" value="1"/>
</dbReference>
<dbReference type="SUPFAM" id="SSF81995">
    <property type="entry name" value="beta-sandwich domain of Sec23/24"/>
    <property type="match status" value="1"/>
</dbReference>
<dbReference type="SUPFAM" id="SSF46785">
    <property type="entry name" value="Winged helix' DNA-binding domain"/>
    <property type="match status" value="1"/>
</dbReference>
<dbReference type="PROSITE" id="PS00657">
    <property type="entry name" value="FORK_HEAD_1"/>
    <property type="match status" value="1"/>
</dbReference>
<dbReference type="PROSITE" id="PS00658">
    <property type="entry name" value="FORK_HEAD_2"/>
    <property type="match status" value="1"/>
</dbReference>
<dbReference type="PROSITE" id="PS50039">
    <property type="entry name" value="FORK_HEAD_3"/>
    <property type="match status" value="1"/>
</dbReference>
<sequence>MLDMGDRKEVKMIPKSSFSINSLVPEAVQNDNHHASHGHHNSHHPQHHHHHHHHHHPPPPAPQPPPPPQQQPPPPQAPQPPQARGAPAADDDKGPQQLLLPPPPPPAAALDGAKADGLGGKGEPGGGGAGELAPVGPDEKEKGAGAGGEEKKGAGEGGKDGEGGKEGEKKNGKYEKPPFSYNALIMMAIRQSPEKRLTLNGIYEFIMKNFPYYRENKQGWQNSIRHNLSLNKCFVKVPRHYDDPGKGNYWMLDPSSDDVFIGGTTGKLRRRSTTSRAKLAFKRGARLTSTGLTFMDRAGSLYWPMSPFLSLHHPRASSTLSYNGTTSAYPSHPMPYSSVLTQNSLGNNHSFSTANGLSVDRLVNGEIPYATHHLTAAALAASVPCGLSVPCSGTYSLNPCSVNLLAGQTSYFFPHVPHPSMTSQSSTSMSARAASSSTSPQAPSTLPCESLRPSLPSFTTGLSGGLSDYFTHQNQGSSSNPLIH</sequence>